<gene>
    <name evidence="1" type="primary">hcp</name>
    <name type="ordered locus">ECED1_0840</name>
</gene>
<protein>
    <recommendedName>
        <fullName evidence="1">Hydroxylamine reductase</fullName>
        <ecNumber evidence="1">1.7.99.1</ecNumber>
    </recommendedName>
    <alternativeName>
        <fullName evidence="1">Hybrid-cluster protein</fullName>
        <shortName evidence="1">HCP</shortName>
    </alternativeName>
    <alternativeName>
        <fullName evidence="1">Prismane protein</fullName>
    </alternativeName>
</protein>
<reference key="1">
    <citation type="journal article" date="2009" name="PLoS Genet.">
        <title>Organised genome dynamics in the Escherichia coli species results in highly diverse adaptive paths.</title>
        <authorList>
            <person name="Touchon M."/>
            <person name="Hoede C."/>
            <person name="Tenaillon O."/>
            <person name="Barbe V."/>
            <person name="Baeriswyl S."/>
            <person name="Bidet P."/>
            <person name="Bingen E."/>
            <person name="Bonacorsi S."/>
            <person name="Bouchier C."/>
            <person name="Bouvet O."/>
            <person name="Calteau A."/>
            <person name="Chiapello H."/>
            <person name="Clermont O."/>
            <person name="Cruveiller S."/>
            <person name="Danchin A."/>
            <person name="Diard M."/>
            <person name="Dossat C."/>
            <person name="Karoui M.E."/>
            <person name="Frapy E."/>
            <person name="Garry L."/>
            <person name="Ghigo J.M."/>
            <person name="Gilles A.M."/>
            <person name="Johnson J."/>
            <person name="Le Bouguenec C."/>
            <person name="Lescat M."/>
            <person name="Mangenot S."/>
            <person name="Martinez-Jehanne V."/>
            <person name="Matic I."/>
            <person name="Nassif X."/>
            <person name="Oztas S."/>
            <person name="Petit M.A."/>
            <person name="Pichon C."/>
            <person name="Rouy Z."/>
            <person name="Ruf C.S."/>
            <person name="Schneider D."/>
            <person name="Tourret J."/>
            <person name="Vacherie B."/>
            <person name="Vallenet D."/>
            <person name="Medigue C."/>
            <person name="Rocha E.P.C."/>
            <person name="Denamur E."/>
        </authorList>
    </citation>
    <scope>NUCLEOTIDE SEQUENCE [LARGE SCALE GENOMIC DNA]</scope>
    <source>
        <strain>ED1a</strain>
    </source>
</reference>
<evidence type="ECO:0000255" key="1">
    <source>
        <dbReference type="HAMAP-Rule" id="MF_00069"/>
    </source>
</evidence>
<keyword id="KW-0001">2Fe-2S</keyword>
<keyword id="KW-0963">Cytoplasm</keyword>
<keyword id="KW-0408">Iron</keyword>
<keyword id="KW-0411">Iron-sulfur</keyword>
<keyword id="KW-0479">Metal-binding</keyword>
<keyword id="KW-0560">Oxidoreductase</keyword>
<name>HCP_ECO81</name>
<comment type="function">
    <text evidence="1">Catalyzes the reduction of hydroxylamine to form NH(3) and H(2)O.</text>
</comment>
<comment type="catalytic activity">
    <reaction evidence="1">
        <text>A + NH4(+) + H2O = hydroxylamine + AH2 + H(+)</text>
        <dbReference type="Rhea" id="RHEA:22052"/>
        <dbReference type="ChEBI" id="CHEBI:13193"/>
        <dbReference type="ChEBI" id="CHEBI:15377"/>
        <dbReference type="ChEBI" id="CHEBI:15378"/>
        <dbReference type="ChEBI" id="CHEBI:15429"/>
        <dbReference type="ChEBI" id="CHEBI:17499"/>
        <dbReference type="ChEBI" id="CHEBI:28938"/>
        <dbReference type="EC" id="1.7.99.1"/>
    </reaction>
</comment>
<comment type="cofactor">
    <cofactor evidence="1">
        <name>[2Fe-2S] cluster</name>
        <dbReference type="ChEBI" id="CHEBI:190135"/>
    </cofactor>
    <text evidence="1">Binds 1 [2Fe-2S] cluster.</text>
</comment>
<comment type="cofactor">
    <cofactor evidence="1">
        <name>hybrid [4Fe-2O-2S] cluster</name>
        <dbReference type="ChEBI" id="CHEBI:60519"/>
    </cofactor>
    <text evidence="1">Binds 1 hybrid [4Fe-2O-2S] cluster.</text>
</comment>
<comment type="subcellular location">
    <subcellularLocation>
        <location evidence="1">Cytoplasm</location>
    </subcellularLocation>
</comment>
<comment type="similarity">
    <text evidence="1">Belongs to the HCP family.</text>
</comment>
<dbReference type="EC" id="1.7.99.1" evidence="1"/>
<dbReference type="EMBL" id="CU928162">
    <property type="protein sequence ID" value="CAR07044.1"/>
    <property type="molecule type" value="Genomic_DNA"/>
</dbReference>
<dbReference type="RefSeq" id="WP_000458817.1">
    <property type="nucleotide sequence ID" value="NC_011745.1"/>
</dbReference>
<dbReference type="SMR" id="B7MQX7"/>
<dbReference type="GeneID" id="75202475"/>
<dbReference type="KEGG" id="ecq:ECED1_0840"/>
<dbReference type="HOGENOM" id="CLU_038344_2_0_6"/>
<dbReference type="Proteomes" id="UP000000748">
    <property type="component" value="Chromosome"/>
</dbReference>
<dbReference type="GO" id="GO:0005737">
    <property type="term" value="C:cytoplasm"/>
    <property type="evidence" value="ECO:0007669"/>
    <property type="project" value="UniProtKB-SubCell"/>
</dbReference>
<dbReference type="GO" id="GO:0051537">
    <property type="term" value="F:2 iron, 2 sulfur cluster binding"/>
    <property type="evidence" value="ECO:0007669"/>
    <property type="project" value="UniProtKB-KW"/>
</dbReference>
<dbReference type="GO" id="GO:0050418">
    <property type="term" value="F:hydroxylamine reductase activity"/>
    <property type="evidence" value="ECO:0007669"/>
    <property type="project" value="UniProtKB-UniRule"/>
</dbReference>
<dbReference type="GO" id="GO:0046872">
    <property type="term" value="F:metal ion binding"/>
    <property type="evidence" value="ECO:0007669"/>
    <property type="project" value="UniProtKB-KW"/>
</dbReference>
<dbReference type="GO" id="GO:0004601">
    <property type="term" value="F:peroxidase activity"/>
    <property type="evidence" value="ECO:0007669"/>
    <property type="project" value="TreeGrafter"/>
</dbReference>
<dbReference type="GO" id="GO:0042542">
    <property type="term" value="P:response to hydrogen peroxide"/>
    <property type="evidence" value="ECO:0007669"/>
    <property type="project" value="TreeGrafter"/>
</dbReference>
<dbReference type="CDD" id="cd01914">
    <property type="entry name" value="HCP"/>
    <property type="match status" value="1"/>
</dbReference>
<dbReference type="FunFam" id="1.20.1270.20:FF:000001">
    <property type="entry name" value="Hydroxylamine reductase"/>
    <property type="match status" value="1"/>
</dbReference>
<dbReference type="FunFam" id="1.20.1270.20:FF:000002">
    <property type="entry name" value="Hydroxylamine reductase"/>
    <property type="match status" value="1"/>
</dbReference>
<dbReference type="FunFam" id="3.40.50.2030:FF:000001">
    <property type="entry name" value="Hydroxylamine reductase"/>
    <property type="match status" value="1"/>
</dbReference>
<dbReference type="FunFam" id="3.40.50.2030:FF:000002">
    <property type="entry name" value="Hydroxylamine reductase"/>
    <property type="match status" value="1"/>
</dbReference>
<dbReference type="Gene3D" id="1.20.1270.20">
    <property type="match status" value="2"/>
</dbReference>
<dbReference type="Gene3D" id="3.40.50.2030">
    <property type="match status" value="2"/>
</dbReference>
<dbReference type="HAMAP" id="MF_00069">
    <property type="entry name" value="Hydroxylam_reduct"/>
    <property type="match status" value="1"/>
</dbReference>
<dbReference type="InterPro" id="IPR004137">
    <property type="entry name" value="HCP/CODH"/>
</dbReference>
<dbReference type="InterPro" id="IPR010048">
    <property type="entry name" value="Hydroxylam_reduct"/>
</dbReference>
<dbReference type="InterPro" id="IPR016099">
    <property type="entry name" value="Prismane-like_a/b-sand"/>
</dbReference>
<dbReference type="InterPro" id="IPR011254">
    <property type="entry name" value="Prismane-like_sf"/>
</dbReference>
<dbReference type="InterPro" id="IPR016100">
    <property type="entry name" value="Prismane_a-bundle"/>
</dbReference>
<dbReference type="NCBIfam" id="TIGR01703">
    <property type="entry name" value="hybrid_clust"/>
    <property type="match status" value="1"/>
</dbReference>
<dbReference type="NCBIfam" id="NF003658">
    <property type="entry name" value="PRK05290.1"/>
    <property type="match status" value="1"/>
</dbReference>
<dbReference type="PANTHER" id="PTHR30109">
    <property type="entry name" value="HYDROXYLAMINE REDUCTASE"/>
    <property type="match status" value="1"/>
</dbReference>
<dbReference type="PANTHER" id="PTHR30109:SF0">
    <property type="entry name" value="HYDROXYLAMINE REDUCTASE"/>
    <property type="match status" value="1"/>
</dbReference>
<dbReference type="Pfam" id="PF03063">
    <property type="entry name" value="Prismane"/>
    <property type="match status" value="1"/>
</dbReference>
<dbReference type="PIRSF" id="PIRSF000076">
    <property type="entry name" value="HCP"/>
    <property type="match status" value="1"/>
</dbReference>
<dbReference type="SUPFAM" id="SSF56821">
    <property type="entry name" value="Prismane protein-like"/>
    <property type="match status" value="1"/>
</dbReference>
<accession>B7MQX7</accession>
<proteinExistence type="inferred from homology"/>
<feature type="chain" id="PRO_1000118020" description="Hydroxylamine reductase">
    <location>
        <begin position="1"/>
        <end position="550"/>
    </location>
</feature>
<feature type="binding site" evidence="1">
    <location>
        <position position="3"/>
    </location>
    <ligand>
        <name>[2Fe-2S] cluster</name>
        <dbReference type="ChEBI" id="CHEBI:190135"/>
    </ligand>
</feature>
<feature type="binding site" evidence="1">
    <location>
        <position position="6"/>
    </location>
    <ligand>
        <name>[2Fe-2S] cluster</name>
        <dbReference type="ChEBI" id="CHEBI:190135"/>
    </ligand>
</feature>
<feature type="binding site" evidence="1">
    <location>
        <position position="18"/>
    </location>
    <ligand>
        <name>[2Fe-2S] cluster</name>
        <dbReference type="ChEBI" id="CHEBI:190135"/>
    </ligand>
</feature>
<feature type="binding site" evidence="1">
    <location>
        <position position="25"/>
    </location>
    <ligand>
        <name>[2Fe-2S] cluster</name>
        <dbReference type="ChEBI" id="CHEBI:190135"/>
    </ligand>
</feature>
<feature type="binding site" evidence="1">
    <location>
        <position position="249"/>
    </location>
    <ligand>
        <name>hybrid [4Fe-2O-2S] cluster</name>
        <dbReference type="ChEBI" id="CHEBI:60519"/>
    </ligand>
</feature>
<feature type="binding site" evidence="1">
    <location>
        <position position="273"/>
    </location>
    <ligand>
        <name>hybrid [4Fe-2O-2S] cluster</name>
        <dbReference type="ChEBI" id="CHEBI:60519"/>
    </ligand>
</feature>
<feature type="binding site" evidence="1">
    <location>
        <position position="317"/>
    </location>
    <ligand>
        <name>hybrid [4Fe-2O-2S] cluster</name>
        <dbReference type="ChEBI" id="CHEBI:60519"/>
    </ligand>
</feature>
<feature type="binding site" description="via persulfide group" evidence="1">
    <location>
        <position position="405"/>
    </location>
    <ligand>
        <name>hybrid [4Fe-2O-2S] cluster</name>
        <dbReference type="ChEBI" id="CHEBI:60519"/>
    </ligand>
</feature>
<feature type="binding site" evidence="1">
    <location>
        <position position="433"/>
    </location>
    <ligand>
        <name>hybrid [4Fe-2O-2S] cluster</name>
        <dbReference type="ChEBI" id="CHEBI:60519"/>
    </ligand>
</feature>
<feature type="binding site" evidence="1">
    <location>
        <position position="458"/>
    </location>
    <ligand>
        <name>hybrid [4Fe-2O-2S] cluster</name>
        <dbReference type="ChEBI" id="CHEBI:60519"/>
    </ligand>
</feature>
<feature type="binding site" evidence="1">
    <location>
        <position position="492"/>
    </location>
    <ligand>
        <name>hybrid [4Fe-2O-2S] cluster</name>
        <dbReference type="ChEBI" id="CHEBI:60519"/>
    </ligand>
</feature>
<feature type="binding site" evidence="1">
    <location>
        <position position="494"/>
    </location>
    <ligand>
        <name>hybrid [4Fe-2O-2S] cluster</name>
        <dbReference type="ChEBI" id="CHEBI:60519"/>
    </ligand>
</feature>
<feature type="modified residue" description="Cysteine persulfide" evidence="1">
    <location>
        <position position="405"/>
    </location>
</feature>
<sequence length="550" mass="60048">MFCVQCEQTIRTPAGNGCSYAQGMCGKTAETSDLQDLLIAALQGLSAWAVKAREYGIINHDVDSFAPRAFFSTLTNVNFDSPRIVGYAREAIALREALKAQCLAVDANARVDNPMADLQLVSDDLGELQRQAAEFTPNKDKAAIGENILGLRLLCLYGLKGAAAYMEHAHVLGQYDNDIYAQYHKIMAWLGTWPADMNALLECSMEIGQMNFKVMSILDAGETGKYGHPTPTQVNVKATAGKCILISGHDLKDLYNLLEQTEGTGVNVYTHGEMLPAHGYPELRKFKHLVGNYGSGWQNQQVEFARFPGPIVMTSNCIIDPTVGAYDDRIWTRSIVGWPGVRHLDGEDFSAVIAQAQQMAGFPYSEIPHLITVGFGRQTLLGAADTLIDLVSREKLRHIFLLGGCDGARGERHYFTDFATSVPDDCLILTLACGKYRFNKLEFGDIEGLPRLVDAGQCNDAYSAIILAVTLAEKLGCGVNDLPLSLVLSWFEQKAIVILLTLLSLGVKNIVTGPTAPGFLTPDLLAVLNEKFGLRSITTVEEDMKQLLSA</sequence>
<organism>
    <name type="scientific">Escherichia coli O81 (strain ED1a)</name>
    <dbReference type="NCBI Taxonomy" id="585397"/>
    <lineage>
        <taxon>Bacteria</taxon>
        <taxon>Pseudomonadati</taxon>
        <taxon>Pseudomonadota</taxon>
        <taxon>Gammaproteobacteria</taxon>
        <taxon>Enterobacterales</taxon>
        <taxon>Enterobacteriaceae</taxon>
        <taxon>Escherichia</taxon>
    </lineage>
</organism>